<gene>
    <name evidence="1" type="primary">fucI</name>
    <name type="ordered locus">SPH_2352</name>
</gene>
<reference key="1">
    <citation type="journal article" date="2010" name="Genome Biol.">
        <title>Structure and dynamics of the pan-genome of Streptococcus pneumoniae and closely related species.</title>
        <authorList>
            <person name="Donati C."/>
            <person name="Hiller N.L."/>
            <person name="Tettelin H."/>
            <person name="Muzzi A."/>
            <person name="Croucher N.J."/>
            <person name="Angiuoli S.V."/>
            <person name="Oggioni M."/>
            <person name="Dunning Hotopp J.C."/>
            <person name="Hu F.Z."/>
            <person name="Riley D.R."/>
            <person name="Covacci A."/>
            <person name="Mitchell T.J."/>
            <person name="Bentley S.D."/>
            <person name="Kilian M."/>
            <person name="Ehrlich G.D."/>
            <person name="Rappuoli R."/>
            <person name="Moxon E.R."/>
            <person name="Masignani V."/>
        </authorList>
    </citation>
    <scope>NUCLEOTIDE SEQUENCE [LARGE SCALE GENOMIC DNA]</scope>
    <source>
        <strain>Hungary19A-6</strain>
    </source>
</reference>
<comment type="function">
    <text evidence="1">Converts the aldose L-fucose into the corresponding ketose L-fuculose.</text>
</comment>
<comment type="catalytic activity">
    <reaction evidence="1">
        <text>L-fucose = L-fuculose</text>
        <dbReference type="Rhea" id="RHEA:17233"/>
        <dbReference type="ChEBI" id="CHEBI:2181"/>
        <dbReference type="ChEBI" id="CHEBI:17617"/>
        <dbReference type="EC" id="5.3.1.25"/>
    </reaction>
</comment>
<comment type="cofactor">
    <cofactor evidence="1">
        <name>Mn(2+)</name>
        <dbReference type="ChEBI" id="CHEBI:29035"/>
    </cofactor>
</comment>
<comment type="pathway">
    <text evidence="1">Carbohydrate degradation; L-fucose degradation; L-lactaldehyde and glycerone phosphate from L-fucose: step 1/3.</text>
</comment>
<comment type="subcellular location">
    <subcellularLocation>
        <location evidence="1">Cytoplasm</location>
    </subcellularLocation>
</comment>
<comment type="similarity">
    <text evidence="1">Belongs to the L-fucose isomerase family.</text>
</comment>
<dbReference type="EC" id="5.3.1.25" evidence="1"/>
<dbReference type="EMBL" id="CP000936">
    <property type="protein sequence ID" value="ACA36785.1"/>
    <property type="molecule type" value="Genomic_DNA"/>
</dbReference>
<dbReference type="RefSeq" id="WP_000614259.1">
    <property type="nucleotide sequence ID" value="NC_010380.1"/>
</dbReference>
<dbReference type="SMR" id="B1I9W8"/>
<dbReference type="KEGG" id="spv:SPH_2352"/>
<dbReference type="HOGENOM" id="CLU_033326_1_0_9"/>
<dbReference type="UniPathway" id="UPA00563">
    <property type="reaction ID" value="UER00624"/>
</dbReference>
<dbReference type="Proteomes" id="UP000002163">
    <property type="component" value="Chromosome"/>
</dbReference>
<dbReference type="GO" id="GO:0005737">
    <property type="term" value="C:cytoplasm"/>
    <property type="evidence" value="ECO:0007669"/>
    <property type="project" value="UniProtKB-SubCell"/>
</dbReference>
<dbReference type="GO" id="GO:0008790">
    <property type="term" value="F:arabinose isomerase activity"/>
    <property type="evidence" value="ECO:0007669"/>
    <property type="project" value="TreeGrafter"/>
</dbReference>
<dbReference type="GO" id="GO:0008736">
    <property type="term" value="F:L-fucose isomerase activity"/>
    <property type="evidence" value="ECO:0007669"/>
    <property type="project" value="UniProtKB-UniRule"/>
</dbReference>
<dbReference type="GO" id="GO:0030145">
    <property type="term" value="F:manganese ion binding"/>
    <property type="evidence" value="ECO:0007669"/>
    <property type="project" value="UniProtKB-UniRule"/>
</dbReference>
<dbReference type="GO" id="GO:0019571">
    <property type="term" value="P:D-arabinose catabolic process"/>
    <property type="evidence" value="ECO:0007669"/>
    <property type="project" value="TreeGrafter"/>
</dbReference>
<dbReference type="GO" id="GO:0042355">
    <property type="term" value="P:L-fucose catabolic process"/>
    <property type="evidence" value="ECO:0007669"/>
    <property type="project" value="UniProtKB-UniRule"/>
</dbReference>
<dbReference type="CDD" id="cd03556">
    <property type="entry name" value="L-fucose_isomerase"/>
    <property type="match status" value="1"/>
</dbReference>
<dbReference type="FunFam" id="3.20.14.10:FF:000001">
    <property type="entry name" value="L-fucose isomerase"/>
    <property type="match status" value="1"/>
</dbReference>
<dbReference type="FunFam" id="3.40.50.1070:FF:000001">
    <property type="entry name" value="L-fucose isomerase"/>
    <property type="match status" value="1"/>
</dbReference>
<dbReference type="Gene3D" id="3.40.50.1070">
    <property type="match status" value="1"/>
</dbReference>
<dbReference type="Gene3D" id="3.40.275.10">
    <property type="entry name" value="L-fucose Isomerase, Chain A, domain 2"/>
    <property type="match status" value="1"/>
</dbReference>
<dbReference type="Gene3D" id="3.20.14.10">
    <property type="entry name" value="L-fucose/L-arabinose isomerase, C-terminal"/>
    <property type="match status" value="1"/>
</dbReference>
<dbReference type="HAMAP" id="MF_01254">
    <property type="entry name" value="Fucose_iso"/>
    <property type="match status" value="1"/>
</dbReference>
<dbReference type="InterPro" id="IPR004216">
    <property type="entry name" value="Fuc/Ara_isomerase_C"/>
</dbReference>
<dbReference type="InterPro" id="IPR038393">
    <property type="entry name" value="Fuc_iso_dom3_sf"/>
</dbReference>
<dbReference type="InterPro" id="IPR015888">
    <property type="entry name" value="Fuc_isomerase_C"/>
</dbReference>
<dbReference type="InterPro" id="IPR038391">
    <property type="entry name" value="Fucose_iso_dom1_sf"/>
</dbReference>
<dbReference type="InterPro" id="IPR012888">
    <property type="entry name" value="Fucose_iso_N1"/>
</dbReference>
<dbReference type="InterPro" id="IPR005763">
    <property type="entry name" value="Fucose_isomerase"/>
</dbReference>
<dbReference type="InterPro" id="IPR038392">
    <property type="entry name" value="Fucose_isomerase_dom2_sf"/>
</dbReference>
<dbReference type="InterPro" id="IPR009015">
    <property type="entry name" value="Fucose_isomerase_N/cen_sf"/>
</dbReference>
<dbReference type="InterPro" id="IPR012889">
    <property type="entry name" value="Fucose_isomerase_N2"/>
</dbReference>
<dbReference type="NCBIfam" id="TIGR01089">
    <property type="entry name" value="fucI"/>
    <property type="match status" value="1"/>
</dbReference>
<dbReference type="NCBIfam" id="NF008220">
    <property type="entry name" value="PRK10991.1"/>
    <property type="match status" value="1"/>
</dbReference>
<dbReference type="PANTHER" id="PTHR37840">
    <property type="entry name" value="L-FUCOSE ISOMERASE"/>
    <property type="match status" value="1"/>
</dbReference>
<dbReference type="PANTHER" id="PTHR37840:SF1">
    <property type="entry name" value="L-FUCOSE ISOMERASE"/>
    <property type="match status" value="1"/>
</dbReference>
<dbReference type="Pfam" id="PF02952">
    <property type="entry name" value="Fucose_iso_C"/>
    <property type="match status" value="1"/>
</dbReference>
<dbReference type="Pfam" id="PF07881">
    <property type="entry name" value="Fucose_iso_N1"/>
    <property type="match status" value="1"/>
</dbReference>
<dbReference type="Pfam" id="PF07882">
    <property type="entry name" value="Fucose_iso_N2"/>
    <property type="match status" value="1"/>
</dbReference>
<dbReference type="SUPFAM" id="SSF50443">
    <property type="entry name" value="FucI/AraA C-terminal domain-like"/>
    <property type="match status" value="1"/>
</dbReference>
<dbReference type="SUPFAM" id="SSF53743">
    <property type="entry name" value="FucI/AraA N-terminal and middle domains"/>
    <property type="match status" value="1"/>
</dbReference>
<proteinExistence type="inferred from homology"/>
<protein>
    <recommendedName>
        <fullName evidence="1">L-fucose isomerase</fullName>
        <ecNumber evidence="1">5.3.1.25</ecNumber>
    </recommendedName>
    <alternativeName>
        <fullName evidence="1">6-deoxy-L-galactose isomerase</fullName>
    </alternativeName>
    <alternativeName>
        <fullName>FucIase</fullName>
    </alternativeName>
</protein>
<name>FUCI_STRPI</name>
<sequence>MIQHPRIGIRPTIDGRRQGVRESLEVQTMNMAKSVADLISSTLKYPDGEPVECVISPSTIGRVPEAAASHELFKKSNVCATITVTPCWCYGSETMDMSPDIPHAIWGFNGTERPGAVYLAAVLASHAQKGIPAFGIYGRDVQEASDTAIPEDVKEKLLRYARAALATGLMRDTAYLSMGSVSMGIGGSIVNPDFFQEYLGMRNESVDMTEFTRRMDRGIYDPEEFERALKWVKENVKEGFDHNREDLVLSREEKDRQWEFVIKMFMIGRDLMVGNPRLAELGFEEEAVGHHALVAGFQGQRQWTDHFPNGDFMETFLNTQFDWNGIRKPFVFATENDSLNGVSMLFNYLLTNTPQIFADVRTYWSPEAVKRVTGHTLEGCAAAGFLHLINSGSCTLDGTGQATRDGKPVMKPFWELEESEVQAMLENTDFPPANREYFRGGGFSTRFLTKGDMPVTMVRLNLLKGVGPVLQIAEGYTLELPEDVHHTLDNRTDPGWPTTWFAPRLTGKGAFKSVYDVMNNWGANHGAITYGHIGADLITLASMLRIPVNMHNVPEEDIFRPKNWSLFGTEDLESADYRACQLLGPLHK</sequence>
<organism>
    <name type="scientific">Streptococcus pneumoniae (strain Hungary19A-6)</name>
    <dbReference type="NCBI Taxonomy" id="487214"/>
    <lineage>
        <taxon>Bacteria</taxon>
        <taxon>Bacillati</taxon>
        <taxon>Bacillota</taxon>
        <taxon>Bacilli</taxon>
        <taxon>Lactobacillales</taxon>
        <taxon>Streptococcaceae</taxon>
        <taxon>Streptococcus</taxon>
    </lineage>
</organism>
<evidence type="ECO:0000255" key="1">
    <source>
        <dbReference type="HAMAP-Rule" id="MF_01254"/>
    </source>
</evidence>
<accession>B1I9W8</accession>
<feature type="chain" id="PRO_1000139965" description="L-fucose isomerase">
    <location>
        <begin position="1"/>
        <end position="588"/>
    </location>
</feature>
<feature type="active site" description="Proton acceptor" evidence="1">
    <location>
        <position position="335"/>
    </location>
</feature>
<feature type="active site" description="Proton acceptor" evidence="1">
    <location>
        <position position="359"/>
    </location>
</feature>
<feature type="binding site" evidence="1">
    <location>
        <position position="335"/>
    </location>
    <ligand>
        <name>Mn(2+)</name>
        <dbReference type="ChEBI" id="CHEBI:29035"/>
    </ligand>
</feature>
<feature type="binding site" evidence="1">
    <location>
        <position position="359"/>
    </location>
    <ligand>
        <name>Mn(2+)</name>
        <dbReference type="ChEBI" id="CHEBI:29035"/>
    </ligand>
</feature>
<feature type="binding site" evidence="1">
    <location>
        <position position="525"/>
    </location>
    <ligand>
        <name>Mn(2+)</name>
        <dbReference type="ChEBI" id="CHEBI:29035"/>
    </ligand>
</feature>
<keyword id="KW-0119">Carbohydrate metabolism</keyword>
<keyword id="KW-0963">Cytoplasm</keyword>
<keyword id="KW-0294">Fucose metabolism</keyword>
<keyword id="KW-0413">Isomerase</keyword>
<keyword id="KW-0464">Manganese</keyword>
<keyword id="KW-0479">Metal-binding</keyword>